<organism>
    <name type="scientific">Shewanella halifaxensis (strain HAW-EB4)</name>
    <dbReference type="NCBI Taxonomy" id="458817"/>
    <lineage>
        <taxon>Bacteria</taxon>
        <taxon>Pseudomonadati</taxon>
        <taxon>Pseudomonadota</taxon>
        <taxon>Gammaproteobacteria</taxon>
        <taxon>Alteromonadales</taxon>
        <taxon>Shewanellaceae</taxon>
        <taxon>Shewanella</taxon>
    </lineage>
</organism>
<name>RS16_SHEHH</name>
<gene>
    <name evidence="1" type="primary">rpsP</name>
    <name type="ordered locus">Shal_1097</name>
</gene>
<sequence>MVTIRLARGGAKKRPFYNIVVADSRNARDGRFIERVGFFNPVARGQEEALRLDLDRVEHWVANGAATTDRVAKLIKDARKAAA</sequence>
<proteinExistence type="inferred from homology"/>
<dbReference type="EMBL" id="CP000931">
    <property type="protein sequence ID" value="ABZ75666.1"/>
    <property type="molecule type" value="Genomic_DNA"/>
</dbReference>
<dbReference type="RefSeq" id="WP_012154307.1">
    <property type="nucleotide sequence ID" value="NC_010334.1"/>
</dbReference>
<dbReference type="SMR" id="B0TJ75"/>
<dbReference type="STRING" id="458817.Shal_1097"/>
<dbReference type="KEGG" id="shl:Shal_1097"/>
<dbReference type="eggNOG" id="COG0228">
    <property type="taxonomic scope" value="Bacteria"/>
</dbReference>
<dbReference type="HOGENOM" id="CLU_100590_5_1_6"/>
<dbReference type="OrthoDB" id="9807878at2"/>
<dbReference type="Proteomes" id="UP000001317">
    <property type="component" value="Chromosome"/>
</dbReference>
<dbReference type="GO" id="GO:0005737">
    <property type="term" value="C:cytoplasm"/>
    <property type="evidence" value="ECO:0007669"/>
    <property type="project" value="UniProtKB-ARBA"/>
</dbReference>
<dbReference type="GO" id="GO:0015935">
    <property type="term" value="C:small ribosomal subunit"/>
    <property type="evidence" value="ECO:0007669"/>
    <property type="project" value="TreeGrafter"/>
</dbReference>
<dbReference type="GO" id="GO:0003735">
    <property type="term" value="F:structural constituent of ribosome"/>
    <property type="evidence" value="ECO:0007669"/>
    <property type="project" value="InterPro"/>
</dbReference>
<dbReference type="GO" id="GO:0006412">
    <property type="term" value="P:translation"/>
    <property type="evidence" value="ECO:0007669"/>
    <property type="project" value="UniProtKB-UniRule"/>
</dbReference>
<dbReference type="FunFam" id="3.30.1320.10:FF:000001">
    <property type="entry name" value="30S ribosomal protein S16"/>
    <property type="match status" value="1"/>
</dbReference>
<dbReference type="Gene3D" id="3.30.1320.10">
    <property type="match status" value="1"/>
</dbReference>
<dbReference type="HAMAP" id="MF_00385">
    <property type="entry name" value="Ribosomal_bS16"/>
    <property type="match status" value="1"/>
</dbReference>
<dbReference type="InterPro" id="IPR000307">
    <property type="entry name" value="Ribosomal_bS16"/>
</dbReference>
<dbReference type="InterPro" id="IPR020592">
    <property type="entry name" value="Ribosomal_bS16_CS"/>
</dbReference>
<dbReference type="InterPro" id="IPR023803">
    <property type="entry name" value="Ribosomal_bS16_dom_sf"/>
</dbReference>
<dbReference type="NCBIfam" id="TIGR00002">
    <property type="entry name" value="S16"/>
    <property type="match status" value="1"/>
</dbReference>
<dbReference type="PANTHER" id="PTHR12919">
    <property type="entry name" value="30S RIBOSOMAL PROTEIN S16"/>
    <property type="match status" value="1"/>
</dbReference>
<dbReference type="PANTHER" id="PTHR12919:SF20">
    <property type="entry name" value="SMALL RIBOSOMAL SUBUNIT PROTEIN BS16M"/>
    <property type="match status" value="1"/>
</dbReference>
<dbReference type="Pfam" id="PF00886">
    <property type="entry name" value="Ribosomal_S16"/>
    <property type="match status" value="1"/>
</dbReference>
<dbReference type="SUPFAM" id="SSF54565">
    <property type="entry name" value="Ribosomal protein S16"/>
    <property type="match status" value="1"/>
</dbReference>
<dbReference type="PROSITE" id="PS00732">
    <property type="entry name" value="RIBOSOMAL_S16"/>
    <property type="match status" value="1"/>
</dbReference>
<reference key="1">
    <citation type="submission" date="2008-01" db="EMBL/GenBank/DDBJ databases">
        <title>Complete sequence of Shewanella halifaxensis HAW-EB4.</title>
        <authorList>
            <consortium name="US DOE Joint Genome Institute"/>
            <person name="Copeland A."/>
            <person name="Lucas S."/>
            <person name="Lapidus A."/>
            <person name="Glavina del Rio T."/>
            <person name="Dalin E."/>
            <person name="Tice H."/>
            <person name="Bruce D."/>
            <person name="Goodwin L."/>
            <person name="Pitluck S."/>
            <person name="Sims D."/>
            <person name="Brettin T."/>
            <person name="Detter J.C."/>
            <person name="Han C."/>
            <person name="Kuske C.R."/>
            <person name="Schmutz J."/>
            <person name="Larimer F."/>
            <person name="Land M."/>
            <person name="Hauser L."/>
            <person name="Kyrpides N."/>
            <person name="Kim E."/>
            <person name="Zhao J.-S."/>
            <person name="Richardson P."/>
        </authorList>
    </citation>
    <scope>NUCLEOTIDE SEQUENCE [LARGE SCALE GENOMIC DNA]</scope>
    <source>
        <strain>HAW-EB4</strain>
    </source>
</reference>
<evidence type="ECO:0000255" key="1">
    <source>
        <dbReference type="HAMAP-Rule" id="MF_00385"/>
    </source>
</evidence>
<evidence type="ECO:0000305" key="2"/>
<comment type="similarity">
    <text evidence="1">Belongs to the bacterial ribosomal protein bS16 family.</text>
</comment>
<feature type="chain" id="PRO_1000080170" description="Small ribosomal subunit protein bS16">
    <location>
        <begin position="1"/>
        <end position="83"/>
    </location>
</feature>
<keyword id="KW-0687">Ribonucleoprotein</keyword>
<keyword id="KW-0689">Ribosomal protein</keyword>
<accession>B0TJ75</accession>
<protein>
    <recommendedName>
        <fullName evidence="1">Small ribosomal subunit protein bS16</fullName>
    </recommendedName>
    <alternativeName>
        <fullName evidence="2">30S ribosomal protein S16</fullName>
    </alternativeName>
</protein>